<organism>
    <name type="scientific">Salmonella dublin (strain CT_02021853)</name>
    <dbReference type="NCBI Taxonomy" id="439851"/>
    <lineage>
        <taxon>Bacteria</taxon>
        <taxon>Pseudomonadati</taxon>
        <taxon>Pseudomonadota</taxon>
        <taxon>Gammaproteobacteria</taxon>
        <taxon>Enterobacterales</taxon>
        <taxon>Enterobacteriaceae</taxon>
        <taxon>Salmonella</taxon>
    </lineage>
</organism>
<evidence type="ECO:0000255" key="1">
    <source>
        <dbReference type="HAMAP-Rule" id="MF_01012"/>
    </source>
</evidence>
<reference key="1">
    <citation type="journal article" date="2011" name="J. Bacteriol.">
        <title>Comparative genomics of 28 Salmonella enterica isolates: evidence for CRISPR-mediated adaptive sublineage evolution.</title>
        <authorList>
            <person name="Fricke W.F."/>
            <person name="Mammel M.K."/>
            <person name="McDermott P.F."/>
            <person name="Tartera C."/>
            <person name="White D.G."/>
            <person name="Leclerc J.E."/>
            <person name="Ravel J."/>
            <person name="Cebula T.A."/>
        </authorList>
    </citation>
    <scope>NUCLEOTIDE SEQUENCE [LARGE SCALE GENOMIC DNA]</scope>
    <source>
        <strain>CT_02021853</strain>
    </source>
</reference>
<name>RLMC_SALDC</name>
<accession>B5FPZ6</accession>
<gene>
    <name evidence="1" type="primary">rlmC</name>
    <name type="synonym">rumB</name>
    <name type="ordered locus">SeD_A0987</name>
</gene>
<protein>
    <recommendedName>
        <fullName evidence="1">23S rRNA (uracil(747)-C(5))-methyltransferase RlmC</fullName>
        <ecNumber evidence="1">2.1.1.189</ecNumber>
    </recommendedName>
    <alternativeName>
        <fullName evidence="1">23S rRNA(m5U747)-methyltransferase</fullName>
    </alternativeName>
</protein>
<feature type="chain" id="PRO_1000200873" description="23S rRNA (uracil(747)-C(5))-methyltransferase RlmC">
    <location>
        <begin position="1"/>
        <end position="375"/>
    </location>
</feature>
<feature type="active site" description="Nucleophile" evidence="1">
    <location>
        <position position="334"/>
    </location>
</feature>
<feature type="binding site" evidence="1">
    <location>
        <position position="3"/>
    </location>
    <ligand>
        <name>[4Fe-4S] cluster</name>
        <dbReference type="ChEBI" id="CHEBI:49883"/>
    </ligand>
</feature>
<feature type="binding site" evidence="1">
    <location>
        <position position="11"/>
    </location>
    <ligand>
        <name>[4Fe-4S] cluster</name>
        <dbReference type="ChEBI" id="CHEBI:49883"/>
    </ligand>
</feature>
<feature type="binding site" evidence="1">
    <location>
        <position position="14"/>
    </location>
    <ligand>
        <name>[4Fe-4S] cluster</name>
        <dbReference type="ChEBI" id="CHEBI:49883"/>
    </ligand>
</feature>
<feature type="binding site" evidence="1">
    <location>
        <position position="87"/>
    </location>
    <ligand>
        <name>[4Fe-4S] cluster</name>
        <dbReference type="ChEBI" id="CHEBI:49883"/>
    </ligand>
</feature>
<feature type="binding site" evidence="1">
    <location>
        <position position="212"/>
    </location>
    <ligand>
        <name>S-adenosyl-L-methionine</name>
        <dbReference type="ChEBI" id="CHEBI:59789"/>
    </ligand>
</feature>
<feature type="binding site" evidence="1">
    <location>
        <position position="241"/>
    </location>
    <ligand>
        <name>S-adenosyl-L-methionine</name>
        <dbReference type="ChEBI" id="CHEBI:59789"/>
    </ligand>
</feature>
<feature type="binding site" evidence="1">
    <location>
        <position position="262"/>
    </location>
    <ligand>
        <name>S-adenosyl-L-methionine</name>
        <dbReference type="ChEBI" id="CHEBI:59789"/>
    </ligand>
</feature>
<feature type="binding site" evidence="1">
    <location>
        <position position="307"/>
    </location>
    <ligand>
        <name>S-adenosyl-L-methionine</name>
        <dbReference type="ChEBI" id="CHEBI:59789"/>
    </ligand>
</feature>
<proteinExistence type="inferred from homology"/>
<keyword id="KW-0004">4Fe-4S</keyword>
<keyword id="KW-0408">Iron</keyword>
<keyword id="KW-0411">Iron-sulfur</keyword>
<keyword id="KW-0479">Metal-binding</keyword>
<keyword id="KW-0489">Methyltransferase</keyword>
<keyword id="KW-0698">rRNA processing</keyword>
<keyword id="KW-0949">S-adenosyl-L-methionine</keyword>
<keyword id="KW-0808">Transferase</keyword>
<dbReference type="EC" id="2.1.1.189" evidence="1"/>
<dbReference type="EMBL" id="CP001144">
    <property type="protein sequence ID" value="ACH74450.1"/>
    <property type="molecule type" value="Genomic_DNA"/>
</dbReference>
<dbReference type="RefSeq" id="WP_001149796.1">
    <property type="nucleotide sequence ID" value="NC_011205.1"/>
</dbReference>
<dbReference type="SMR" id="B5FPZ6"/>
<dbReference type="KEGG" id="sed:SeD_A0987"/>
<dbReference type="HOGENOM" id="CLU_014689_0_0_6"/>
<dbReference type="Proteomes" id="UP000008322">
    <property type="component" value="Chromosome"/>
</dbReference>
<dbReference type="GO" id="GO:0051539">
    <property type="term" value="F:4 iron, 4 sulfur cluster binding"/>
    <property type="evidence" value="ECO:0007669"/>
    <property type="project" value="UniProtKB-KW"/>
</dbReference>
<dbReference type="GO" id="GO:0005506">
    <property type="term" value="F:iron ion binding"/>
    <property type="evidence" value="ECO:0007669"/>
    <property type="project" value="UniProtKB-UniRule"/>
</dbReference>
<dbReference type="GO" id="GO:0070041">
    <property type="term" value="F:rRNA (uridine-C5-)-methyltransferase activity"/>
    <property type="evidence" value="ECO:0007669"/>
    <property type="project" value="UniProtKB-UniRule"/>
</dbReference>
<dbReference type="GO" id="GO:0070475">
    <property type="term" value="P:rRNA base methylation"/>
    <property type="evidence" value="ECO:0007669"/>
    <property type="project" value="TreeGrafter"/>
</dbReference>
<dbReference type="CDD" id="cd02440">
    <property type="entry name" value="AdoMet_MTases"/>
    <property type="match status" value="1"/>
</dbReference>
<dbReference type="FunFam" id="2.40.50.1070:FF:000002">
    <property type="entry name" value="23S rRNA (uracil(747)-C(5))-methyltransferase RlmC"/>
    <property type="match status" value="1"/>
</dbReference>
<dbReference type="FunFam" id="3.40.50.150:FF:000049">
    <property type="entry name" value="23S rRNA (uracil(747)-C(5))-methyltransferase RlmC"/>
    <property type="match status" value="1"/>
</dbReference>
<dbReference type="Gene3D" id="2.40.50.1070">
    <property type="match status" value="1"/>
</dbReference>
<dbReference type="Gene3D" id="3.40.50.150">
    <property type="entry name" value="Vaccinia Virus protein VP39"/>
    <property type="match status" value="1"/>
</dbReference>
<dbReference type="HAMAP" id="MF_01012">
    <property type="entry name" value="23SrRNA_methyltr_RlmC"/>
    <property type="match status" value="1"/>
</dbReference>
<dbReference type="InterPro" id="IPR011825">
    <property type="entry name" value="23SrRNA_MeTrfase_RlmC"/>
</dbReference>
<dbReference type="InterPro" id="IPR030390">
    <property type="entry name" value="MeTrfase_TrmA_AS"/>
</dbReference>
<dbReference type="InterPro" id="IPR030391">
    <property type="entry name" value="MeTrfase_TrmA_CS"/>
</dbReference>
<dbReference type="InterPro" id="IPR029063">
    <property type="entry name" value="SAM-dependent_MTases_sf"/>
</dbReference>
<dbReference type="InterPro" id="IPR010280">
    <property type="entry name" value="U5_MeTrfase_fam"/>
</dbReference>
<dbReference type="NCBIfam" id="TIGR02085">
    <property type="entry name" value="meth_trns_rumB"/>
    <property type="match status" value="1"/>
</dbReference>
<dbReference type="PANTHER" id="PTHR11061">
    <property type="entry name" value="RNA M5U METHYLTRANSFERASE"/>
    <property type="match status" value="1"/>
</dbReference>
<dbReference type="PANTHER" id="PTHR11061:SF30">
    <property type="entry name" value="TRNA (URACIL(54)-C(5))-METHYLTRANSFERASE"/>
    <property type="match status" value="1"/>
</dbReference>
<dbReference type="Pfam" id="PF05958">
    <property type="entry name" value="tRNA_U5-meth_tr"/>
    <property type="match status" value="1"/>
</dbReference>
<dbReference type="SUPFAM" id="SSF53335">
    <property type="entry name" value="S-adenosyl-L-methionine-dependent methyltransferases"/>
    <property type="match status" value="1"/>
</dbReference>
<dbReference type="PROSITE" id="PS51687">
    <property type="entry name" value="SAM_MT_RNA_M5U"/>
    <property type="match status" value="1"/>
</dbReference>
<dbReference type="PROSITE" id="PS01230">
    <property type="entry name" value="TRMA_1"/>
    <property type="match status" value="1"/>
</dbReference>
<dbReference type="PROSITE" id="PS01231">
    <property type="entry name" value="TRMA_2"/>
    <property type="match status" value="1"/>
</dbReference>
<sequence>MQCALYDAGRCRSCQWITQSVNEQLSAKTADLHRLLAGLPVEQWCSPIGGPEQHFRNKAKMVVSGSVEKPLFGMLHRDGTPVDLCGCPLYPASFAPVFSALKPFIARAGLTPYNVARKRGELKYLLLTESQFDGGMMLRFVLRSETKLTQLRAALPWLRAQLPQLRVITANIQPVHMAIMEGETEIYLTDQQALAERFNDVPLWIRPQSFFQTNPTVASRLYATARDWVGQLPVRHMWDLFCGVGGFGLHCATPQMQLTGIEIAPEAIACAKQSAAELGLTRLHFQALDSTQFATAQGETPDLVLVNPPRRGIGKPLCDYLAQMAPRFIIYSSCNAQTMAQDIRHLPNYRIQRVQLFDMFPHTAHYEVLTLLCRL</sequence>
<comment type="function">
    <text evidence="1">Catalyzes the formation of 5-methyl-uridine at position 747 (m5U747) in 23S rRNA.</text>
</comment>
<comment type="catalytic activity">
    <reaction evidence="1">
        <text>uridine(747) in 23S rRNA + S-adenosyl-L-methionine = 5-methyluridine(747) in 23S rRNA + S-adenosyl-L-homocysteine + H(+)</text>
        <dbReference type="Rhea" id="RHEA:42628"/>
        <dbReference type="Rhea" id="RHEA-COMP:10154"/>
        <dbReference type="Rhea" id="RHEA-COMP:10155"/>
        <dbReference type="ChEBI" id="CHEBI:15378"/>
        <dbReference type="ChEBI" id="CHEBI:57856"/>
        <dbReference type="ChEBI" id="CHEBI:59789"/>
        <dbReference type="ChEBI" id="CHEBI:65315"/>
        <dbReference type="ChEBI" id="CHEBI:74447"/>
        <dbReference type="EC" id="2.1.1.189"/>
    </reaction>
</comment>
<comment type="similarity">
    <text evidence="1">Belongs to the class I-like SAM-binding methyltransferase superfamily. RNA M5U methyltransferase family. RlmC subfamily.</text>
</comment>